<protein>
    <recommendedName>
        <fullName evidence="1">Small ribosomal subunit protein uS19c</fullName>
    </recommendedName>
    <alternativeName>
        <fullName evidence="2">30S ribosomal protein S19, chloroplastic</fullName>
    </alternativeName>
</protein>
<gene>
    <name evidence="1" type="primary">rps19</name>
</gene>
<accession>A0T0X6</accession>
<feature type="chain" id="PRO_0000276934" description="Small ribosomal subunit protein uS19c">
    <location>
        <begin position="1"/>
        <end position="92"/>
    </location>
</feature>
<sequence length="92" mass="10417">MSRSLKKGPFVAYHLLKKINKMNADGKKDVITTWSRSSTILPNMIGFTIAVYNGKQHVPVFISDQLVGHKLGEFVSTRTFKSHIKADKKTKR</sequence>
<evidence type="ECO:0000255" key="1">
    <source>
        <dbReference type="HAMAP-Rule" id="MF_00531"/>
    </source>
</evidence>
<evidence type="ECO:0000305" key="2"/>
<comment type="function">
    <text evidence="1">Protein S19 forms a complex with S13 that binds strongly to the 16S ribosomal RNA.</text>
</comment>
<comment type="subcellular location">
    <subcellularLocation>
        <location>Plastid</location>
        <location>Chloroplast</location>
    </subcellularLocation>
</comment>
<comment type="similarity">
    <text evidence="1">Belongs to the universal ribosomal protein uS19 family.</text>
</comment>
<organism>
    <name type="scientific">Thalassiosira pseudonana</name>
    <name type="common">Marine diatom</name>
    <name type="synonym">Cyclotella nana</name>
    <dbReference type="NCBI Taxonomy" id="35128"/>
    <lineage>
        <taxon>Eukaryota</taxon>
        <taxon>Sar</taxon>
        <taxon>Stramenopiles</taxon>
        <taxon>Ochrophyta</taxon>
        <taxon>Bacillariophyta</taxon>
        <taxon>Coscinodiscophyceae</taxon>
        <taxon>Thalassiosirophycidae</taxon>
        <taxon>Thalassiosirales</taxon>
        <taxon>Thalassiosiraceae</taxon>
        <taxon>Thalassiosira</taxon>
    </lineage>
</organism>
<name>RR19_THAPS</name>
<dbReference type="EMBL" id="EF067921">
    <property type="protein sequence ID" value="ABK20811.1"/>
    <property type="molecule type" value="Genomic_DNA"/>
</dbReference>
<dbReference type="RefSeq" id="YP_874588.1">
    <property type="nucleotide sequence ID" value="NC_008589.1"/>
</dbReference>
<dbReference type="SMR" id="A0T0X6"/>
<dbReference type="STRING" id="35128.A0T0X6"/>
<dbReference type="GeneID" id="4524751"/>
<dbReference type="InParanoid" id="A0T0X6"/>
<dbReference type="GO" id="GO:0009507">
    <property type="term" value="C:chloroplast"/>
    <property type="evidence" value="ECO:0007669"/>
    <property type="project" value="UniProtKB-SubCell"/>
</dbReference>
<dbReference type="GO" id="GO:0005763">
    <property type="term" value="C:mitochondrial small ribosomal subunit"/>
    <property type="evidence" value="ECO:0000318"/>
    <property type="project" value="GO_Central"/>
</dbReference>
<dbReference type="GO" id="GO:0019843">
    <property type="term" value="F:rRNA binding"/>
    <property type="evidence" value="ECO:0007669"/>
    <property type="project" value="UniProtKB-UniRule"/>
</dbReference>
<dbReference type="GO" id="GO:0003735">
    <property type="term" value="F:structural constituent of ribosome"/>
    <property type="evidence" value="ECO:0000318"/>
    <property type="project" value="GO_Central"/>
</dbReference>
<dbReference type="GO" id="GO:0000028">
    <property type="term" value="P:ribosomal small subunit assembly"/>
    <property type="evidence" value="ECO:0000318"/>
    <property type="project" value="GO_Central"/>
</dbReference>
<dbReference type="GO" id="GO:0006412">
    <property type="term" value="P:translation"/>
    <property type="evidence" value="ECO:0007669"/>
    <property type="project" value="UniProtKB-UniRule"/>
</dbReference>
<dbReference type="FunFam" id="3.30.860.10:FF:000001">
    <property type="entry name" value="30S ribosomal protein S19"/>
    <property type="match status" value="1"/>
</dbReference>
<dbReference type="Gene3D" id="3.30.860.10">
    <property type="entry name" value="30s Ribosomal Protein S19, Chain A"/>
    <property type="match status" value="1"/>
</dbReference>
<dbReference type="HAMAP" id="MF_00531">
    <property type="entry name" value="Ribosomal_uS19"/>
    <property type="match status" value="1"/>
</dbReference>
<dbReference type="InterPro" id="IPR002222">
    <property type="entry name" value="Ribosomal_uS19"/>
</dbReference>
<dbReference type="InterPro" id="IPR005732">
    <property type="entry name" value="Ribosomal_uS19_bac-type"/>
</dbReference>
<dbReference type="InterPro" id="IPR020934">
    <property type="entry name" value="Ribosomal_uS19_CS"/>
</dbReference>
<dbReference type="InterPro" id="IPR023575">
    <property type="entry name" value="Ribosomal_uS19_SF"/>
</dbReference>
<dbReference type="NCBIfam" id="TIGR01050">
    <property type="entry name" value="rpsS_bact"/>
    <property type="match status" value="1"/>
</dbReference>
<dbReference type="PANTHER" id="PTHR11880">
    <property type="entry name" value="RIBOSOMAL PROTEIN S19P FAMILY MEMBER"/>
    <property type="match status" value="1"/>
</dbReference>
<dbReference type="PANTHER" id="PTHR11880:SF8">
    <property type="entry name" value="SMALL RIBOSOMAL SUBUNIT PROTEIN US19M"/>
    <property type="match status" value="1"/>
</dbReference>
<dbReference type="Pfam" id="PF00203">
    <property type="entry name" value="Ribosomal_S19"/>
    <property type="match status" value="1"/>
</dbReference>
<dbReference type="PIRSF" id="PIRSF002144">
    <property type="entry name" value="Ribosomal_S19"/>
    <property type="match status" value="1"/>
</dbReference>
<dbReference type="PRINTS" id="PR00975">
    <property type="entry name" value="RIBOSOMALS19"/>
</dbReference>
<dbReference type="SUPFAM" id="SSF54570">
    <property type="entry name" value="Ribosomal protein S19"/>
    <property type="match status" value="1"/>
</dbReference>
<dbReference type="PROSITE" id="PS00323">
    <property type="entry name" value="RIBOSOMAL_S19"/>
    <property type="match status" value="1"/>
</dbReference>
<keyword id="KW-0150">Chloroplast</keyword>
<keyword id="KW-0934">Plastid</keyword>
<keyword id="KW-0687">Ribonucleoprotein</keyword>
<keyword id="KW-0689">Ribosomal protein</keyword>
<keyword id="KW-0694">RNA-binding</keyword>
<keyword id="KW-0699">rRNA-binding</keyword>
<geneLocation type="chloroplast"/>
<proteinExistence type="inferred from homology"/>
<reference key="1">
    <citation type="journal article" date="2007" name="Mol. Genet. Genomics">
        <title>Chloroplast genomes of the diatoms Phaeodactylum tricornutum and Thalassiosira pseudonana: comparison with other plastid genomes of the red lineage.</title>
        <authorList>
            <person name="Oudot-Le Secq M.-P."/>
            <person name="Grimwood J."/>
            <person name="Shapiro H."/>
            <person name="Armbrust E.V."/>
            <person name="Bowler C."/>
            <person name="Green B.R."/>
        </authorList>
    </citation>
    <scope>NUCLEOTIDE SEQUENCE [LARGE SCALE GENOMIC DNA]</scope>
    <source>
        <strain>CCMP1335 / NEPCC58 / CCAP 1085/12</strain>
    </source>
</reference>